<sequence>MRPGRPLAGFYATLRRSFRRMSKRSKNKAKKERVPVEDRPPTPMPTSQRLIRRNALGGGVRPDAEDCIQRFHPLEPALGVSTKNFDLLSLRCELGWCG</sequence>
<accession>Q8AZJ3</accession>
<accession>Q04362</accession>
<reference key="1">
    <citation type="journal article" date="1984" name="Nature">
        <title>DNA sequence and expression of the B95-8 Epstein-Barr virus genome.</title>
        <authorList>
            <person name="Baer R."/>
            <person name="Bankier A.T."/>
            <person name="Biggin M.D."/>
            <person name="Deininger P.L."/>
            <person name="Farrell P.J."/>
            <person name="Gibson T.J."/>
            <person name="Hatfull G."/>
            <person name="Hudson G.S."/>
            <person name="Satchwell S.C."/>
            <person name="Seguin C."/>
            <person name="Tuffnell P.S."/>
            <person name="Barrell B.G."/>
        </authorList>
    </citation>
    <scope>NUCLEOTIDE SEQUENCE [LARGE SCALE GENOMIC DNA]</scope>
</reference>
<reference key="2">
    <citation type="journal article" date="2003" name="Virology">
        <title>Updated Epstein-Barr virus (EBV) DNA sequence and analysis of a promoter for the BART (CST, BARF0) RNAs of EBV.</title>
        <authorList>
            <person name="de Jesus O."/>
            <person name="Smith P.R."/>
            <person name="Spender L.C."/>
            <person name="Elgueta Karstegl C."/>
            <person name="Niller H.H."/>
            <person name="Huang D."/>
            <person name="Farrell P.J."/>
        </authorList>
    </citation>
    <scope>GENOME REANNOTATION</scope>
</reference>
<evidence type="ECO:0000256" key="1">
    <source>
        <dbReference type="SAM" id="MobiDB-lite"/>
    </source>
</evidence>
<evidence type="ECO:0000305" key="2"/>
<proteinExistence type="inferred from homology"/>
<keyword id="KW-1185">Reference proteome</keyword>
<protein>
    <recommendedName>
        <fullName>Uncharacterized protein BNLF2b</fullName>
    </recommendedName>
</protein>
<name>BNL2B_EBVB9</name>
<comment type="similarity">
    <text evidence="2">Belongs to the lymphocryptovirus BNLF2b family.</text>
</comment>
<comment type="sequence caution" evidence="2">
    <conflict type="erroneous initiation">
        <sequence resource="EMBL-CDS" id="CAA24811"/>
    </conflict>
</comment>
<comment type="sequence caution" evidence="2">
    <conflict type="erroneous initiation">
        <sequence resource="EMBL-CDS" id="CAD53470"/>
    </conflict>
</comment>
<organismHost>
    <name type="scientific">Homo sapiens</name>
    <name type="common">Human</name>
    <dbReference type="NCBI Taxonomy" id="9606"/>
</organismHost>
<feature type="chain" id="PRO_0000382430" description="Uncharacterized protein BNLF2b">
    <location>
        <begin position="1"/>
        <end position="98"/>
    </location>
</feature>
<feature type="region of interest" description="Disordered" evidence="1">
    <location>
        <begin position="19"/>
        <end position="47"/>
    </location>
</feature>
<feature type="compositionally biased region" description="Basic residues" evidence="1">
    <location>
        <begin position="19"/>
        <end position="31"/>
    </location>
</feature>
<dbReference type="EMBL" id="AJ507799">
    <property type="protein sequence ID" value="CAD53470.1"/>
    <property type="status" value="ALT_INIT"/>
    <property type="molecule type" value="Genomic_DNA"/>
</dbReference>
<dbReference type="EMBL" id="V01555">
    <property type="protein sequence ID" value="CAA24811.1"/>
    <property type="status" value="ALT_INIT"/>
    <property type="molecule type" value="Genomic_DNA"/>
</dbReference>
<dbReference type="PIR" id="A28918">
    <property type="entry name" value="A28918"/>
</dbReference>
<dbReference type="RefSeq" id="YP_401720.2">
    <property type="nucleotide sequence ID" value="NC_007605.1"/>
</dbReference>
<dbReference type="SMR" id="Q8AZJ3"/>
<dbReference type="IntAct" id="Q8AZJ3">
    <property type="interactions" value="50"/>
</dbReference>
<dbReference type="MINT" id="Q8AZJ3"/>
<dbReference type="DNASU" id="3783721"/>
<dbReference type="GeneID" id="3783721"/>
<dbReference type="KEGG" id="vg:3783721"/>
<dbReference type="Proteomes" id="UP000153037">
    <property type="component" value="Segment"/>
</dbReference>
<organism>
    <name type="scientific">Epstein-Barr virus (strain B95-8)</name>
    <name type="common">HHV-4</name>
    <name type="synonym">Human herpesvirus 4</name>
    <dbReference type="NCBI Taxonomy" id="10377"/>
    <lineage>
        <taxon>Viruses</taxon>
        <taxon>Duplodnaviria</taxon>
        <taxon>Heunggongvirae</taxon>
        <taxon>Peploviricota</taxon>
        <taxon>Herviviricetes</taxon>
        <taxon>Herpesvirales</taxon>
        <taxon>Orthoherpesviridae</taxon>
        <taxon>Gammaherpesvirinae</taxon>
        <taxon>Lymphocryptovirus</taxon>
        <taxon>Lymphocryptovirus humangamma4</taxon>
        <taxon>Epstein-Barr virus (strain GD1)</taxon>
    </lineage>
</organism>
<gene>
    <name type="ORF">BNLF2b</name>
</gene>